<keyword id="KW-0413">Isomerase</keyword>
<keyword id="KW-0460">Magnesium</keyword>
<keyword id="KW-0479">Metal-binding</keyword>
<keyword id="KW-0597">Phosphoprotein</keyword>
<keyword id="KW-1185">Reference proteome</keyword>
<reference key="1">
    <citation type="submission" date="2006-12" db="EMBL/GenBank/DDBJ databases">
        <title>Complete sequence of Shewanella amazonensis SB2B.</title>
        <authorList>
            <consortium name="US DOE Joint Genome Institute"/>
            <person name="Copeland A."/>
            <person name="Lucas S."/>
            <person name="Lapidus A."/>
            <person name="Barry K."/>
            <person name="Detter J.C."/>
            <person name="Glavina del Rio T."/>
            <person name="Hammon N."/>
            <person name="Israni S."/>
            <person name="Dalin E."/>
            <person name="Tice H."/>
            <person name="Pitluck S."/>
            <person name="Munk A.C."/>
            <person name="Brettin T."/>
            <person name="Bruce D."/>
            <person name="Han C."/>
            <person name="Tapia R."/>
            <person name="Gilna P."/>
            <person name="Schmutz J."/>
            <person name="Larimer F."/>
            <person name="Land M."/>
            <person name="Hauser L."/>
            <person name="Kyrpides N."/>
            <person name="Mikhailova N."/>
            <person name="Fredrickson J."/>
            <person name="Richardson P."/>
        </authorList>
    </citation>
    <scope>NUCLEOTIDE SEQUENCE [LARGE SCALE GENOMIC DNA]</scope>
    <source>
        <strain>ATCC BAA-1098 / SB2B</strain>
    </source>
</reference>
<sequence length="452" mass="47825">MSRKYFGTDGVRGKVGEFPITPDFAMKLGWAAGTVMAASGTKEVIIGKDTRLSGYMLESAMEAGFCAAGVNVALTGPLPTPAIAYLTSTFRADAGVVISASHNPYYDNGIKFFSNTGTKLTDEQELEIERLLVSAIEGGAMTCVASDKLGKVRRINDAAGRYIEFCKGTFPNSLSLTGLKIVVDSAHGAAYHIAKNVYRELGAEVISINDKPDGININEHCGATHMDSLQTAVMIHEADLGIALDGDADRLMMVDSKGQVIDGDALLYLLAKSAQQRGEQVSGVIGTLMSNLGFEQALANLGIPFKRAKVGDRYVVELLKETGWRLGGENSGHLLMLDFTTTGDAIVASLQVLRALLESGAGLADAITELNMFPQVLINVRLNGNAAVGLSHPSVSDAVATAESALGNDGRVLLRKSGTEPLIRVMVEAKDAVKANQYAELIADAVRAVFPA</sequence>
<protein>
    <recommendedName>
        <fullName evidence="1">Phosphoglucosamine mutase 2</fullName>
        <ecNumber evidence="1">5.4.2.10</ecNumber>
    </recommendedName>
</protein>
<feature type="chain" id="PRO_0000305671" description="Phosphoglucosamine mutase 2">
    <location>
        <begin position="1"/>
        <end position="452"/>
    </location>
</feature>
<feature type="active site" description="Phosphoserine intermediate" evidence="1">
    <location>
        <position position="101"/>
    </location>
</feature>
<feature type="binding site" description="via phosphate group" evidence="1">
    <location>
        <position position="101"/>
    </location>
    <ligand>
        <name>Mg(2+)</name>
        <dbReference type="ChEBI" id="CHEBI:18420"/>
    </ligand>
</feature>
<feature type="binding site" evidence="1">
    <location>
        <position position="245"/>
    </location>
    <ligand>
        <name>Mg(2+)</name>
        <dbReference type="ChEBI" id="CHEBI:18420"/>
    </ligand>
</feature>
<feature type="binding site" evidence="1">
    <location>
        <position position="247"/>
    </location>
    <ligand>
        <name>Mg(2+)</name>
        <dbReference type="ChEBI" id="CHEBI:18420"/>
    </ligand>
</feature>
<feature type="binding site" evidence="1">
    <location>
        <position position="249"/>
    </location>
    <ligand>
        <name>Mg(2+)</name>
        <dbReference type="ChEBI" id="CHEBI:18420"/>
    </ligand>
</feature>
<feature type="modified residue" description="Phosphoserine" evidence="1">
    <location>
        <position position="101"/>
    </location>
</feature>
<comment type="function">
    <text evidence="1">Catalyzes the conversion of glucosamine-6-phosphate to glucosamine-1-phosphate.</text>
</comment>
<comment type="catalytic activity">
    <reaction evidence="1">
        <text>alpha-D-glucosamine 1-phosphate = D-glucosamine 6-phosphate</text>
        <dbReference type="Rhea" id="RHEA:23424"/>
        <dbReference type="ChEBI" id="CHEBI:58516"/>
        <dbReference type="ChEBI" id="CHEBI:58725"/>
        <dbReference type="EC" id="5.4.2.10"/>
    </reaction>
</comment>
<comment type="cofactor">
    <cofactor evidence="1">
        <name>Mg(2+)</name>
        <dbReference type="ChEBI" id="CHEBI:18420"/>
    </cofactor>
    <text evidence="1">Binds 1 Mg(2+) ion per subunit.</text>
</comment>
<comment type="PTM">
    <text evidence="1">Activated by phosphorylation.</text>
</comment>
<comment type="similarity">
    <text evidence="1">Belongs to the phosphohexose mutase family.</text>
</comment>
<name>GLMM2_SHEAM</name>
<gene>
    <name evidence="1" type="primary">glmM2</name>
    <name type="ordered locus">Sama_2243</name>
</gene>
<accession>A1S7U2</accession>
<evidence type="ECO:0000255" key="1">
    <source>
        <dbReference type="HAMAP-Rule" id="MF_01554"/>
    </source>
</evidence>
<organism>
    <name type="scientific">Shewanella amazonensis (strain ATCC BAA-1098 / SB2B)</name>
    <dbReference type="NCBI Taxonomy" id="326297"/>
    <lineage>
        <taxon>Bacteria</taxon>
        <taxon>Pseudomonadati</taxon>
        <taxon>Pseudomonadota</taxon>
        <taxon>Gammaproteobacteria</taxon>
        <taxon>Alteromonadales</taxon>
        <taxon>Shewanellaceae</taxon>
        <taxon>Shewanella</taxon>
    </lineage>
</organism>
<proteinExistence type="inferred from homology"/>
<dbReference type="EC" id="5.4.2.10" evidence="1"/>
<dbReference type="EMBL" id="CP000507">
    <property type="protein sequence ID" value="ABM00449.1"/>
    <property type="molecule type" value="Genomic_DNA"/>
</dbReference>
<dbReference type="RefSeq" id="WP_011760356.1">
    <property type="nucleotide sequence ID" value="NC_008700.1"/>
</dbReference>
<dbReference type="SMR" id="A1S7U2"/>
<dbReference type="STRING" id="326297.Sama_2243"/>
<dbReference type="KEGG" id="saz:Sama_2243"/>
<dbReference type="eggNOG" id="COG1109">
    <property type="taxonomic scope" value="Bacteria"/>
</dbReference>
<dbReference type="HOGENOM" id="CLU_016950_7_0_6"/>
<dbReference type="OrthoDB" id="9803322at2"/>
<dbReference type="Proteomes" id="UP000009175">
    <property type="component" value="Chromosome"/>
</dbReference>
<dbReference type="GO" id="GO:0005829">
    <property type="term" value="C:cytosol"/>
    <property type="evidence" value="ECO:0007669"/>
    <property type="project" value="TreeGrafter"/>
</dbReference>
<dbReference type="GO" id="GO:0000287">
    <property type="term" value="F:magnesium ion binding"/>
    <property type="evidence" value="ECO:0007669"/>
    <property type="project" value="UniProtKB-UniRule"/>
</dbReference>
<dbReference type="GO" id="GO:0008966">
    <property type="term" value="F:phosphoglucosamine mutase activity"/>
    <property type="evidence" value="ECO:0007669"/>
    <property type="project" value="UniProtKB-UniRule"/>
</dbReference>
<dbReference type="GO" id="GO:0004615">
    <property type="term" value="F:phosphomannomutase activity"/>
    <property type="evidence" value="ECO:0007669"/>
    <property type="project" value="TreeGrafter"/>
</dbReference>
<dbReference type="GO" id="GO:0005975">
    <property type="term" value="P:carbohydrate metabolic process"/>
    <property type="evidence" value="ECO:0007669"/>
    <property type="project" value="InterPro"/>
</dbReference>
<dbReference type="GO" id="GO:0009252">
    <property type="term" value="P:peptidoglycan biosynthetic process"/>
    <property type="evidence" value="ECO:0007669"/>
    <property type="project" value="TreeGrafter"/>
</dbReference>
<dbReference type="GO" id="GO:0006048">
    <property type="term" value="P:UDP-N-acetylglucosamine biosynthetic process"/>
    <property type="evidence" value="ECO:0007669"/>
    <property type="project" value="TreeGrafter"/>
</dbReference>
<dbReference type="CDD" id="cd05802">
    <property type="entry name" value="GlmM"/>
    <property type="match status" value="1"/>
</dbReference>
<dbReference type="FunFam" id="3.30.310.50:FF:000001">
    <property type="entry name" value="Phosphoglucosamine mutase"/>
    <property type="match status" value="1"/>
</dbReference>
<dbReference type="FunFam" id="3.40.120.10:FF:000001">
    <property type="entry name" value="Phosphoglucosamine mutase"/>
    <property type="match status" value="1"/>
</dbReference>
<dbReference type="FunFam" id="3.40.120.10:FF:000003">
    <property type="entry name" value="Phosphoglucosamine mutase"/>
    <property type="match status" value="1"/>
</dbReference>
<dbReference type="Gene3D" id="3.40.120.10">
    <property type="entry name" value="Alpha-D-Glucose-1,6-Bisphosphate, subunit A, domain 3"/>
    <property type="match status" value="3"/>
</dbReference>
<dbReference type="Gene3D" id="3.30.310.50">
    <property type="entry name" value="Alpha-D-phosphohexomutase, C-terminal domain"/>
    <property type="match status" value="1"/>
</dbReference>
<dbReference type="HAMAP" id="MF_01554_B">
    <property type="entry name" value="GlmM_B"/>
    <property type="match status" value="1"/>
</dbReference>
<dbReference type="InterPro" id="IPR005844">
    <property type="entry name" value="A-D-PHexomutase_a/b/a-I"/>
</dbReference>
<dbReference type="InterPro" id="IPR016055">
    <property type="entry name" value="A-D-PHexomutase_a/b/a-I/II/III"/>
</dbReference>
<dbReference type="InterPro" id="IPR005845">
    <property type="entry name" value="A-D-PHexomutase_a/b/a-II"/>
</dbReference>
<dbReference type="InterPro" id="IPR005846">
    <property type="entry name" value="A-D-PHexomutase_a/b/a-III"/>
</dbReference>
<dbReference type="InterPro" id="IPR005843">
    <property type="entry name" value="A-D-PHexomutase_C"/>
</dbReference>
<dbReference type="InterPro" id="IPR036900">
    <property type="entry name" value="A-D-PHexomutase_C_sf"/>
</dbReference>
<dbReference type="InterPro" id="IPR016066">
    <property type="entry name" value="A-D-PHexomutase_CS"/>
</dbReference>
<dbReference type="InterPro" id="IPR005841">
    <property type="entry name" value="Alpha-D-phosphohexomutase_SF"/>
</dbReference>
<dbReference type="InterPro" id="IPR006352">
    <property type="entry name" value="GlmM_bact"/>
</dbReference>
<dbReference type="InterPro" id="IPR050060">
    <property type="entry name" value="Phosphoglucosamine_mutase"/>
</dbReference>
<dbReference type="NCBIfam" id="TIGR01455">
    <property type="entry name" value="glmM"/>
    <property type="match status" value="1"/>
</dbReference>
<dbReference type="NCBIfam" id="NF008139">
    <property type="entry name" value="PRK10887.1"/>
    <property type="match status" value="1"/>
</dbReference>
<dbReference type="PANTHER" id="PTHR42946:SF1">
    <property type="entry name" value="PHOSPHOGLUCOMUTASE (ALPHA-D-GLUCOSE-1,6-BISPHOSPHATE-DEPENDENT)"/>
    <property type="match status" value="1"/>
</dbReference>
<dbReference type="PANTHER" id="PTHR42946">
    <property type="entry name" value="PHOSPHOHEXOSE MUTASE"/>
    <property type="match status" value="1"/>
</dbReference>
<dbReference type="Pfam" id="PF02878">
    <property type="entry name" value="PGM_PMM_I"/>
    <property type="match status" value="1"/>
</dbReference>
<dbReference type="Pfam" id="PF02879">
    <property type="entry name" value="PGM_PMM_II"/>
    <property type="match status" value="1"/>
</dbReference>
<dbReference type="Pfam" id="PF02880">
    <property type="entry name" value="PGM_PMM_III"/>
    <property type="match status" value="1"/>
</dbReference>
<dbReference type="Pfam" id="PF00408">
    <property type="entry name" value="PGM_PMM_IV"/>
    <property type="match status" value="1"/>
</dbReference>
<dbReference type="PRINTS" id="PR00509">
    <property type="entry name" value="PGMPMM"/>
</dbReference>
<dbReference type="SUPFAM" id="SSF55957">
    <property type="entry name" value="Phosphoglucomutase, C-terminal domain"/>
    <property type="match status" value="1"/>
</dbReference>
<dbReference type="SUPFAM" id="SSF53738">
    <property type="entry name" value="Phosphoglucomutase, first 3 domains"/>
    <property type="match status" value="3"/>
</dbReference>
<dbReference type="PROSITE" id="PS00710">
    <property type="entry name" value="PGM_PMM"/>
    <property type="match status" value="1"/>
</dbReference>